<accession>O29003</accession>
<protein>
    <recommendedName>
        <fullName evidence="1">UPF0173 metal-dependent hydrolase AF_1265</fullName>
    </recommendedName>
</protein>
<comment type="similarity">
    <text evidence="1">Belongs to the UPF0173 family.</text>
</comment>
<reference key="1">
    <citation type="journal article" date="1997" name="Nature">
        <title>The complete genome sequence of the hyperthermophilic, sulphate-reducing archaeon Archaeoglobus fulgidus.</title>
        <authorList>
            <person name="Klenk H.-P."/>
            <person name="Clayton R.A."/>
            <person name="Tomb J.-F."/>
            <person name="White O."/>
            <person name="Nelson K.E."/>
            <person name="Ketchum K.A."/>
            <person name="Dodson R.J."/>
            <person name="Gwinn M.L."/>
            <person name="Hickey E.K."/>
            <person name="Peterson J.D."/>
            <person name="Richardson D.L."/>
            <person name="Kerlavage A.R."/>
            <person name="Graham D.E."/>
            <person name="Kyrpides N.C."/>
            <person name="Fleischmann R.D."/>
            <person name="Quackenbush J."/>
            <person name="Lee N.H."/>
            <person name="Sutton G.G."/>
            <person name="Gill S.R."/>
            <person name="Kirkness E.F."/>
            <person name="Dougherty B.A."/>
            <person name="McKenney K."/>
            <person name="Adams M.D."/>
            <person name="Loftus B.J."/>
            <person name="Peterson S.N."/>
            <person name="Reich C.I."/>
            <person name="McNeil L.K."/>
            <person name="Badger J.H."/>
            <person name="Glodek A."/>
            <person name="Zhou L."/>
            <person name="Overbeek R."/>
            <person name="Gocayne J.D."/>
            <person name="Weidman J.F."/>
            <person name="McDonald L.A."/>
            <person name="Utterback T.R."/>
            <person name="Cotton M.D."/>
            <person name="Spriggs T."/>
            <person name="Artiach P."/>
            <person name="Kaine B.P."/>
            <person name="Sykes S.M."/>
            <person name="Sadow P.W."/>
            <person name="D'Andrea K.P."/>
            <person name="Bowman C."/>
            <person name="Fujii C."/>
            <person name="Garland S.A."/>
            <person name="Mason T.M."/>
            <person name="Olsen G.J."/>
            <person name="Fraser C.M."/>
            <person name="Smith H.O."/>
            <person name="Woese C.R."/>
            <person name="Venter J.C."/>
        </authorList>
    </citation>
    <scope>NUCLEOTIDE SEQUENCE [LARGE SCALE GENOMIC DNA]</scope>
    <source>
        <strain>ATCC 49558 / DSM 4304 / JCM 9628 / NBRC 100126 / VC-16</strain>
    </source>
</reference>
<name>Y1265_ARCFU</name>
<sequence length="231" mass="25277">MKITWLGHAAFLLEGSMKVLIDPFLTGNPNAPVKPEEVKADYILVTHGHGDHLGDAVEIAKRNNAPIICIHELSRILSRYDVETMGMNMGGTARTGSIAVTMVPAWHSADLEDEQGNIISAGLPAGFIVSMDGVRVYHTGDTDVFLDMQLIGELHRPDVMLLPIGDYYTMGIAGAVKALELVKPKVAIPMHYNTFPLVEKDPEDFRKAVKAKGLDVEVVILKPGESYEFNK</sequence>
<proteinExistence type="inferred from homology"/>
<feature type="chain" id="PRO_0000156391" description="UPF0173 metal-dependent hydrolase AF_1265">
    <location>
        <begin position="1"/>
        <end position="231"/>
    </location>
</feature>
<gene>
    <name type="ordered locus">AF_1265</name>
</gene>
<evidence type="ECO:0000255" key="1">
    <source>
        <dbReference type="HAMAP-Rule" id="MF_00457"/>
    </source>
</evidence>
<organism>
    <name type="scientific">Archaeoglobus fulgidus (strain ATCC 49558 / DSM 4304 / JCM 9628 / NBRC 100126 / VC-16)</name>
    <dbReference type="NCBI Taxonomy" id="224325"/>
    <lineage>
        <taxon>Archaea</taxon>
        <taxon>Methanobacteriati</taxon>
        <taxon>Methanobacteriota</taxon>
        <taxon>Archaeoglobi</taxon>
        <taxon>Archaeoglobales</taxon>
        <taxon>Archaeoglobaceae</taxon>
        <taxon>Archaeoglobus</taxon>
    </lineage>
</organism>
<keyword id="KW-0378">Hydrolase</keyword>
<keyword id="KW-1185">Reference proteome</keyword>
<dbReference type="EMBL" id="AE000782">
    <property type="protein sequence ID" value="AAB89979.1"/>
    <property type="molecule type" value="Genomic_DNA"/>
</dbReference>
<dbReference type="PIR" id="H69407">
    <property type="entry name" value="H69407"/>
</dbReference>
<dbReference type="RefSeq" id="WP_010878760.1">
    <property type="nucleotide sequence ID" value="NC_000917.1"/>
</dbReference>
<dbReference type="SMR" id="O29003"/>
<dbReference type="STRING" id="224325.AF_1265"/>
<dbReference type="PaxDb" id="224325-AF_1265"/>
<dbReference type="DNASU" id="1484489"/>
<dbReference type="EnsemblBacteria" id="AAB89979">
    <property type="protein sequence ID" value="AAB89979"/>
    <property type="gene ID" value="AF_1265"/>
</dbReference>
<dbReference type="KEGG" id="afu:AF_1265"/>
<dbReference type="eggNOG" id="arCOG00497">
    <property type="taxonomic scope" value="Archaea"/>
</dbReference>
<dbReference type="HOGENOM" id="CLU_070010_4_0_2"/>
<dbReference type="OrthoDB" id="28313at2157"/>
<dbReference type="PhylomeDB" id="O29003"/>
<dbReference type="Proteomes" id="UP000002199">
    <property type="component" value="Chromosome"/>
</dbReference>
<dbReference type="GO" id="GO:0016787">
    <property type="term" value="F:hydrolase activity"/>
    <property type="evidence" value="ECO:0007669"/>
    <property type="project" value="UniProtKB-UniRule"/>
</dbReference>
<dbReference type="Gene3D" id="3.60.15.10">
    <property type="entry name" value="Ribonuclease Z/Hydroxyacylglutathione hydrolase-like"/>
    <property type="match status" value="1"/>
</dbReference>
<dbReference type="HAMAP" id="MF_00457">
    <property type="entry name" value="UPF0173"/>
    <property type="match status" value="1"/>
</dbReference>
<dbReference type="InterPro" id="IPR001279">
    <property type="entry name" value="Metallo-B-lactamas"/>
</dbReference>
<dbReference type="InterPro" id="IPR036866">
    <property type="entry name" value="RibonucZ/Hydroxyglut_hydro"/>
</dbReference>
<dbReference type="InterPro" id="IPR022877">
    <property type="entry name" value="UPF0173"/>
</dbReference>
<dbReference type="InterPro" id="IPR050114">
    <property type="entry name" value="UPF0173_UPF0282_UlaG_hydrolase"/>
</dbReference>
<dbReference type="NCBIfam" id="NF001911">
    <property type="entry name" value="PRK00685.1"/>
    <property type="match status" value="1"/>
</dbReference>
<dbReference type="PANTHER" id="PTHR43546:SF3">
    <property type="entry name" value="UPF0173 METAL-DEPENDENT HYDROLASE MJ1163"/>
    <property type="match status" value="1"/>
</dbReference>
<dbReference type="PANTHER" id="PTHR43546">
    <property type="entry name" value="UPF0173 METAL-DEPENDENT HYDROLASE MJ1163-RELATED"/>
    <property type="match status" value="1"/>
</dbReference>
<dbReference type="Pfam" id="PF13483">
    <property type="entry name" value="Lactamase_B_3"/>
    <property type="match status" value="1"/>
</dbReference>
<dbReference type="SMART" id="SM00849">
    <property type="entry name" value="Lactamase_B"/>
    <property type="match status" value="1"/>
</dbReference>
<dbReference type="SUPFAM" id="SSF56281">
    <property type="entry name" value="Metallo-hydrolase/oxidoreductase"/>
    <property type="match status" value="1"/>
</dbReference>